<proteinExistence type="inferred from homology"/>
<gene>
    <name evidence="1" type="primary">fbp</name>
    <name type="ordered locus">SARI_03213</name>
</gene>
<evidence type="ECO:0000255" key="1">
    <source>
        <dbReference type="HAMAP-Rule" id="MF_01855"/>
    </source>
</evidence>
<reference key="1">
    <citation type="submission" date="2007-11" db="EMBL/GenBank/DDBJ databases">
        <authorList>
            <consortium name="The Salmonella enterica serovar Arizonae Genome Sequencing Project"/>
            <person name="McClelland M."/>
            <person name="Sanderson E.K."/>
            <person name="Porwollik S."/>
            <person name="Spieth J."/>
            <person name="Clifton W.S."/>
            <person name="Fulton R."/>
            <person name="Chunyan W."/>
            <person name="Wollam A."/>
            <person name="Shah N."/>
            <person name="Pepin K."/>
            <person name="Bhonagiri V."/>
            <person name="Nash W."/>
            <person name="Johnson M."/>
            <person name="Thiruvilangam P."/>
            <person name="Wilson R."/>
        </authorList>
    </citation>
    <scope>NUCLEOTIDE SEQUENCE [LARGE SCALE GENOMIC DNA]</scope>
    <source>
        <strain>ATCC BAA-731 / CDC346-86 / RSK2980</strain>
    </source>
</reference>
<name>F16PA_SALAR</name>
<keyword id="KW-0119">Carbohydrate metabolism</keyword>
<keyword id="KW-0963">Cytoplasm</keyword>
<keyword id="KW-0378">Hydrolase</keyword>
<keyword id="KW-0460">Magnesium</keyword>
<keyword id="KW-0479">Metal-binding</keyword>
<keyword id="KW-1185">Reference proteome</keyword>
<feature type="chain" id="PRO_0000364685" description="Fructose-1,6-bisphosphatase class 1">
    <location>
        <begin position="1"/>
        <end position="332"/>
    </location>
</feature>
<feature type="binding site" evidence="1">
    <location>
        <position position="89"/>
    </location>
    <ligand>
        <name>Mg(2+)</name>
        <dbReference type="ChEBI" id="CHEBI:18420"/>
        <label>1</label>
    </ligand>
</feature>
<feature type="binding site" evidence="1">
    <location>
        <position position="110"/>
    </location>
    <ligand>
        <name>Mg(2+)</name>
        <dbReference type="ChEBI" id="CHEBI:18420"/>
        <label>1</label>
    </ligand>
</feature>
<feature type="binding site" evidence="1">
    <location>
        <position position="110"/>
    </location>
    <ligand>
        <name>Mg(2+)</name>
        <dbReference type="ChEBI" id="CHEBI:18420"/>
        <label>2</label>
    </ligand>
</feature>
<feature type="binding site" evidence="1">
    <location>
        <position position="112"/>
    </location>
    <ligand>
        <name>Mg(2+)</name>
        <dbReference type="ChEBI" id="CHEBI:18420"/>
        <label>1</label>
    </ligand>
</feature>
<feature type="binding site" evidence="1">
    <location>
        <begin position="113"/>
        <end position="116"/>
    </location>
    <ligand>
        <name>substrate</name>
    </ligand>
</feature>
<feature type="binding site" evidence="1">
    <location>
        <position position="113"/>
    </location>
    <ligand>
        <name>Mg(2+)</name>
        <dbReference type="ChEBI" id="CHEBI:18420"/>
        <label>2</label>
    </ligand>
</feature>
<feature type="binding site" evidence="1">
    <location>
        <position position="206"/>
    </location>
    <ligand>
        <name>substrate</name>
    </ligand>
</feature>
<feature type="binding site" evidence="1">
    <location>
        <position position="239"/>
    </location>
    <ligand>
        <name>substrate</name>
    </ligand>
</feature>
<feature type="binding site" evidence="1">
    <location>
        <begin position="257"/>
        <end position="259"/>
    </location>
    <ligand>
        <name>substrate</name>
    </ligand>
</feature>
<feature type="binding site" evidence="1">
    <location>
        <position position="269"/>
    </location>
    <ligand>
        <name>substrate</name>
    </ligand>
</feature>
<feature type="binding site" evidence="1">
    <location>
        <position position="275"/>
    </location>
    <ligand>
        <name>Mg(2+)</name>
        <dbReference type="ChEBI" id="CHEBI:18420"/>
        <label>2</label>
    </ligand>
</feature>
<accession>A9MEY3</accession>
<sequence length="332" mass="36813">MKTLGEFIVEKQHEFSQATGELTALLSAIKLGAKIIHRDINKAGLVDILGASGAENVQGEVQQKLDLFANEKLKAALKARDIVAGIASEEEDEIVVFEGCEHAKYVVLMDPLDGSSNIDVNVSVGTIFSIYRRVTPVGTPVTEEDFLQPGNKQVAAGYVVYGSSTMLVYTTGCGVHAFTYDPSLGVFCLCQERMRFPEKGKTYSINEGNYIKFPNGVKKYIKFCQEEDSSTSRPYTSRYIGSLVADFHRNLLKGGIYLYPSTASHPQGKLRLLYECNPMAFLAEQAGGKASDGKERILDIIPESLHQRRSFFVGNRHMVEDVERFIREYPDA</sequence>
<organism>
    <name type="scientific">Salmonella arizonae (strain ATCC BAA-731 / CDC346-86 / RSK2980)</name>
    <dbReference type="NCBI Taxonomy" id="41514"/>
    <lineage>
        <taxon>Bacteria</taxon>
        <taxon>Pseudomonadati</taxon>
        <taxon>Pseudomonadota</taxon>
        <taxon>Gammaproteobacteria</taxon>
        <taxon>Enterobacterales</taxon>
        <taxon>Enterobacteriaceae</taxon>
        <taxon>Salmonella</taxon>
    </lineage>
</organism>
<dbReference type="EC" id="3.1.3.11" evidence="1"/>
<dbReference type="EMBL" id="CP000880">
    <property type="protein sequence ID" value="ABX23049.1"/>
    <property type="molecule type" value="Genomic_DNA"/>
</dbReference>
<dbReference type="SMR" id="A9MEY3"/>
<dbReference type="STRING" id="41514.SARI_03213"/>
<dbReference type="KEGG" id="ses:SARI_03213"/>
<dbReference type="HOGENOM" id="CLU_039977_2_2_6"/>
<dbReference type="UniPathway" id="UPA00138"/>
<dbReference type="Proteomes" id="UP000002084">
    <property type="component" value="Chromosome"/>
</dbReference>
<dbReference type="GO" id="GO:0005829">
    <property type="term" value="C:cytosol"/>
    <property type="evidence" value="ECO:0007669"/>
    <property type="project" value="TreeGrafter"/>
</dbReference>
<dbReference type="GO" id="GO:0042132">
    <property type="term" value="F:fructose 1,6-bisphosphate 1-phosphatase activity"/>
    <property type="evidence" value="ECO:0007669"/>
    <property type="project" value="UniProtKB-UniRule"/>
</dbReference>
<dbReference type="GO" id="GO:0000287">
    <property type="term" value="F:magnesium ion binding"/>
    <property type="evidence" value="ECO:0007669"/>
    <property type="project" value="UniProtKB-UniRule"/>
</dbReference>
<dbReference type="GO" id="GO:0030388">
    <property type="term" value="P:fructose 1,6-bisphosphate metabolic process"/>
    <property type="evidence" value="ECO:0007669"/>
    <property type="project" value="TreeGrafter"/>
</dbReference>
<dbReference type="GO" id="GO:0006002">
    <property type="term" value="P:fructose 6-phosphate metabolic process"/>
    <property type="evidence" value="ECO:0007669"/>
    <property type="project" value="TreeGrafter"/>
</dbReference>
<dbReference type="GO" id="GO:0006000">
    <property type="term" value="P:fructose metabolic process"/>
    <property type="evidence" value="ECO:0007669"/>
    <property type="project" value="TreeGrafter"/>
</dbReference>
<dbReference type="GO" id="GO:0006094">
    <property type="term" value="P:gluconeogenesis"/>
    <property type="evidence" value="ECO:0007669"/>
    <property type="project" value="UniProtKB-UniRule"/>
</dbReference>
<dbReference type="GO" id="GO:0005986">
    <property type="term" value="P:sucrose biosynthetic process"/>
    <property type="evidence" value="ECO:0007669"/>
    <property type="project" value="TreeGrafter"/>
</dbReference>
<dbReference type="CDD" id="cd00354">
    <property type="entry name" value="FBPase"/>
    <property type="match status" value="1"/>
</dbReference>
<dbReference type="FunFam" id="3.30.540.10:FF:000002">
    <property type="entry name" value="Fructose-1,6-bisphosphatase class 1"/>
    <property type="match status" value="1"/>
</dbReference>
<dbReference type="FunFam" id="3.40.190.80:FF:000001">
    <property type="entry name" value="Fructose-1,6-bisphosphatase class 1"/>
    <property type="match status" value="1"/>
</dbReference>
<dbReference type="Gene3D" id="3.40.190.80">
    <property type="match status" value="1"/>
</dbReference>
<dbReference type="Gene3D" id="3.30.540.10">
    <property type="entry name" value="Fructose-1,6-Bisphosphatase, subunit A, domain 1"/>
    <property type="match status" value="1"/>
</dbReference>
<dbReference type="HAMAP" id="MF_01855">
    <property type="entry name" value="FBPase_class1"/>
    <property type="match status" value="1"/>
</dbReference>
<dbReference type="InterPro" id="IPR044015">
    <property type="entry name" value="FBPase_C_dom"/>
</dbReference>
<dbReference type="InterPro" id="IPR000146">
    <property type="entry name" value="FBPase_class-1"/>
</dbReference>
<dbReference type="InterPro" id="IPR033391">
    <property type="entry name" value="FBPase_N"/>
</dbReference>
<dbReference type="InterPro" id="IPR028343">
    <property type="entry name" value="FBPtase"/>
</dbReference>
<dbReference type="InterPro" id="IPR020548">
    <property type="entry name" value="Fructose_bisphosphatase_AS"/>
</dbReference>
<dbReference type="NCBIfam" id="NF006778">
    <property type="entry name" value="PRK09293.1-1"/>
    <property type="match status" value="1"/>
</dbReference>
<dbReference type="NCBIfam" id="NF006779">
    <property type="entry name" value="PRK09293.1-3"/>
    <property type="match status" value="1"/>
</dbReference>
<dbReference type="PANTHER" id="PTHR11556">
    <property type="entry name" value="FRUCTOSE-1,6-BISPHOSPHATASE-RELATED"/>
    <property type="match status" value="1"/>
</dbReference>
<dbReference type="PANTHER" id="PTHR11556:SF35">
    <property type="entry name" value="SEDOHEPTULOSE-1,7-BISPHOSPHATASE, CHLOROPLASTIC"/>
    <property type="match status" value="1"/>
</dbReference>
<dbReference type="Pfam" id="PF00316">
    <property type="entry name" value="FBPase"/>
    <property type="match status" value="1"/>
</dbReference>
<dbReference type="Pfam" id="PF18913">
    <property type="entry name" value="FBPase_C"/>
    <property type="match status" value="1"/>
</dbReference>
<dbReference type="PIRSF" id="PIRSF500210">
    <property type="entry name" value="FBPtase"/>
    <property type="match status" value="1"/>
</dbReference>
<dbReference type="PIRSF" id="PIRSF000904">
    <property type="entry name" value="FBPtase_SBPase"/>
    <property type="match status" value="1"/>
</dbReference>
<dbReference type="PRINTS" id="PR00115">
    <property type="entry name" value="F16BPHPHTASE"/>
</dbReference>
<dbReference type="SUPFAM" id="SSF56655">
    <property type="entry name" value="Carbohydrate phosphatase"/>
    <property type="match status" value="1"/>
</dbReference>
<dbReference type="PROSITE" id="PS00124">
    <property type="entry name" value="FBPASE"/>
    <property type="match status" value="1"/>
</dbReference>
<comment type="catalytic activity">
    <reaction evidence="1">
        <text>beta-D-fructose 1,6-bisphosphate + H2O = beta-D-fructose 6-phosphate + phosphate</text>
        <dbReference type="Rhea" id="RHEA:11064"/>
        <dbReference type="ChEBI" id="CHEBI:15377"/>
        <dbReference type="ChEBI" id="CHEBI:32966"/>
        <dbReference type="ChEBI" id="CHEBI:43474"/>
        <dbReference type="ChEBI" id="CHEBI:57634"/>
        <dbReference type="EC" id="3.1.3.11"/>
    </reaction>
</comment>
<comment type="cofactor">
    <cofactor evidence="1">
        <name>Mg(2+)</name>
        <dbReference type="ChEBI" id="CHEBI:18420"/>
    </cofactor>
    <text evidence="1">Binds 2 magnesium ions per subunit.</text>
</comment>
<comment type="pathway">
    <text evidence="1">Carbohydrate biosynthesis; gluconeogenesis.</text>
</comment>
<comment type="subunit">
    <text evidence="1">Homotetramer.</text>
</comment>
<comment type="subcellular location">
    <subcellularLocation>
        <location evidence="1">Cytoplasm</location>
    </subcellularLocation>
</comment>
<comment type="similarity">
    <text evidence="1">Belongs to the FBPase class 1 family.</text>
</comment>
<protein>
    <recommendedName>
        <fullName evidence="1">Fructose-1,6-bisphosphatase class 1</fullName>
        <shortName evidence="1">FBPase class 1</shortName>
        <ecNumber evidence="1">3.1.3.11</ecNumber>
    </recommendedName>
    <alternativeName>
        <fullName evidence="1">D-fructose-1,6-bisphosphate 1-phosphohydrolase class 1</fullName>
    </alternativeName>
</protein>